<protein>
    <recommendedName>
        <fullName evidence="1">Large ribosomal subunit protein bL28</fullName>
    </recommendedName>
    <alternativeName>
        <fullName evidence="3">50S ribosomal protein L28</fullName>
    </alternativeName>
</protein>
<dbReference type="EMBL" id="DQ489736">
    <property type="protein sequence ID" value="ACA82351.1"/>
    <property type="molecule type" value="Genomic_DNA"/>
</dbReference>
<dbReference type="RefSeq" id="WP_004900506.1">
    <property type="nucleotide sequence ID" value="NC_010471.1"/>
</dbReference>
<dbReference type="SMR" id="B1MXU9"/>
<dbReference type="STRING" id="349519.LCK_00518"/>
<dbReference type="GeneID" id="61102551"/>
<dbReference type="KEGG" id="lci:LCK_00518"/>
<dbReference type="eggNOG" id="COG0227">
    <property type="taxonomic scope" value="Bacteria"/>
</dbReference>
<dbReference type="HOGENOM" id="CLU_064548_7_1_9"/>
<dbReference type="OrthoDB" id="9805609at2"/>
<dbReference type="Proteomes" id="UP000002166">
    <property type="component" value="Chromosome"/>
</dbReference>
<dbReference type="GO" id="GO:1990904">
    <property type="term" value="C:ribonucleoprotein complex"/>
    <property type="evidence" value="ECO:0007669"/>
    <property type="project" value="UniProtKB-KW"/>
</dbReference>
<dbReference type="GO" id="GO:0005840">
    <property type="term" value="C:ribosome"/>
    <property type="evidence" value="ECO:0007669"/>
    <property type="project" value="UniProtKB-KW"/>
</dbReference>
<dbReference type="GO" id="GO:0003735">
    <property type="term" value="F:structural constituent of ribosome"/>
    <property type="evidence" value="ECO:0007669"/>
    <property type="project" value="InterPro"/>
</dbReference>
<dbReference type="GO" id="GO:0006412">
    <property type="term" value="P:translation"/>
    <property type="evidence" value="ECO:0007669"/>
    <property type="project" value="UniProtKB-UniRule"/>
</dbReference>
<dbReference type="Gene3D" id="2.30.170.40">
    <property type="entry name" value="Ribosomal protein L28/L24"/>
    <property type="match status" value="1"/>
</dbReference>
<dbReference type="HAMAP" id="MF_00373">
    <property type="entry name" value="Ribosomal_bL28"/>
    <property type="match status" value="1"/>
</dbReference>
<dbReference type="InterPro" id="IPR050096">
    <property type="entry name" value="Bacterial_rp_bL28"/>
</dbReference>
<dbReference type="InterPro" id="IPR026569">
    <property type="entry name" value="Ribosomal_bL28"/>
</dbReference>
<dbReference type="InterPro" id="IPR034704">
    <property type="entry name" value="Ribosomal_bL28/bL31-like_sf"/>
</dbReference>
<dbReference type="InterPro" id="IPR001383">
    <property type="entry name" value="Ribosomal_bL28_bact-type"/>
</dbReference>
<dbReference type="InterPro" id="IPR037147">
    <property type="entry name" value="Ribosomal_bL28_sf"/>
</dbReference>
<dbReference type="NCBIfam" id="TIGR00009">
    <property type="entry name" value="L28"/>
    <property type="match status" value="1"/>
</dbReference>
<dbReference type="PANTHER" id="PTHR39080">
    <property type="entry name" value="50S RIBOSOMAL PROTEIN L28"/>
    <property type="match status" value="1"/>
</dbReference>
<dbReference type="PANTHER" id="PTHR39080:SF1">
    <property type="entry name" value="LARGE RIBOSOMAL SUBUNIT PROTEIN BL28A"/>
    <property type="match status" value="1"/>
</dbReference>
<dbReference type="Pfam" id="PF00830">
    <property type="entry name" value="Ribosomal_L28"/>
    <property type="match status" value="1"/>
</dbReference>
<dbReference type="SUPFAM" id="SSF143800">
    <property type="entry name" value="L28p-like"/>
    <property type="match status" value="1"/>
</dbReference>
<feature type="chain" id="PRO_1000205604" description="Large ribosomal subunit protein bL28">
    <location>
        <begin position="1"/>
        <end position="66"/>
    </location>
</feature>
<feature type="region of interest" description="Disordered" evidence="2">
    <location>
        <begin position="1"/>
        <end position="26"/>
    </location>
</feature>
<feature type="compositionally biased region" description="Polar residues" evidence="2">
    <location>
        <begin position="13"/>
        <end position="25"/>
    </location>
</feature>
<accession>B1MXU9</accession>
<name>RL28_LEUCK</name>
<organism>
    <name type="scientific">Leuconostoc citreum (strain KM20)</name>
    <dbReference type="NCBI Taxonomy" id="349519"/>
    <lineage>
        <taxon>Bacteria</taxon>
        <taxon>Bacillati</taxon>
        <taxon>Bacillota</taxon>
        <taxon>Bacilli</taxon>
        <taxon>Lactobacillales</taxon>
        <taxon>Lactobacillaceae</taxon>
        <taxon>Leuconostoc</taxon>
    </lineage>
</organism>
<evidence type="ECO:0000255" key="1">
    <source>
        <dbReference type="HAMAP-Rule" id="MF_00373"/>
    </source>
</evidence>
<evidence type="ECO:0000256" key="2">
    <source>
        <dbReference type="SAM" id="MobiDB-lite"/>
    </source>
</evidence>
<evidence type="ECO:0000305" key="3"/>
<comment type="similarity">
    <text evidence="1">Belongs to the bacterial ribosomal protein bL28 family.</text>
</comment>
<proteinExistence type="inferred from homology"/>
<sequence>MAKDAITGARTRFGNQRSHALNSSRRSWKPNLQKVTVKINGAAAKKVYLTARTLKAGLKNGSIERV</sequence>
<gene>
    <name evidence="1" type="primary">rpmB</name>
    <name type="ordered locus">LCK_00518</name>
</gene>
<reference key="1">
    <citation type="journal article" date="2008" name="J. Bacteriol.">
        <title>Complete genome sequence of Leuconostoc citreum KM20.</title>
        <authorList>
            <person name="Kim J.F."/>
            <person name="Jeong H."/>
            <person name="Lee J.-S."/>
            <person name="Choi S.-H."/>
            <person name="Ha M."/>
            <person name="Hur C.-G."/>
            <person name="Kim J.-S."/>
            <person name="Lee S."/>
            <person name="Park H.-S."/>
            <person name="Park Y.-H."/>
            <person name="Oh T.K."/>
        </authorList>
    </citation>
    <scope>NUCLEOTIDE SEQUENCE [LARGE SCALE GENOMIC DNA]</scope>
    <source>
        <strain>KM20</strain>
    </source>
</reference>
<keyword id="KW-1185">Reference proteome</keyword>
<keyword id="KW-0687">Ribonucleoprotein</keyword>
<keyword id="KW-0689">Ribosomal protein</keyword>